<evidence type="ECO:0000255" key="1">
    <source>
        <dbReference type="HAMAP-Rule" id="MF_01872"/>
    </source>
</evidence>
<reference key="1">
    <citation type="submission" date="2007-02" db="EMBL/GenBank/DDBJ databases">
        <title>Complete sequence of chromosome of Yersinia pestis Pestoides F.</title>
        <authorList>
            <consortium name="US DOE Joint Genome Institute"/>
            <person name="Copeland A."/>
            <person name="Lucas S."/>
            <person name="Lapidus A."/>
            <person name="Barry K."/>
            <person name="Detter J.C."/>
            <person name="Glavina del Rio T."/>
            <person name="Hammon N."/>
            <person name="Israni S."/>
            <person name="Dalin E."/>
            <person name="Tice H."/>
            <person name="Pitluck S."/>
            <person name="Di Bartolo G."/>
            <person name="Chain P."/>
            <person name="Malfatti S."/>
            <person name="Shin M."/>
            <person name="Vergez L."/>
            <person name="Schmutz J."/>
            <person name="Larimer F."/>
            <person name="Land M."/>
            <person name="Hauser L."/>
            <person name="Worsham P."/>
            <person name="Chu M."/>
            <person name="Bearden S."/>
            <person name="Garcia E."/>
            <person name="Richardson P."/>
        </authorList>
    </citation>
    <scope>NUCLEOTIDE SEQUENCE [LARGE SCALE GENOMIC DNA]</scope>
    <source>
        <strain>Pestoides F</strain>
    </source>
</reference>
<dbReference type="EC" id="2.1.1.223" evidence="1"/>
<dbReference type="EMBL" id="CP000668">
    <property type="protein sequence ID" value="ABP39949.1"/>
    <property type="molecule type" value="Genomic_DNA"/>
</dbReference>
<dbReference type="SMR" id="A4TKY7"/>
<dbReference type="KEGG" id="ypp:YPDSF_1562"/>
<dbReference type="GO" id="GO:0005737">
    <property type="term" value="C:cytoplasm"/>
    <property type="evidence" value="ECO:0007669"/>
    <property type="project" value="UniProtKB-SubCell"/>
</dbReference>
<dbReference type="GO" id="GO:0003676">
    <property type="term" value="F:nucleic acid binding"/>
    <property type="evidence" value="ECO:0007669"/>
    <property type="project" value="InterPro"/>
</dbReference>
<dbReference type="GO" id="GO:0016430">
    <property type="term" value="F:tRNA (adenine-N6)-methyltransferase activity"/>
    <property type="evidence" value="ECO:0007669"/>
    <property type="project" value="UniProtKB-UniRule"/>
</dbReference>
<dbReference type="GO" id="GO:0032259">
    <property type="term" value="P:methylation"/>
    <property type="evidence" value="ECO:0007669"/>
    <property type="project" value="UniProtKB-KW"/>
</dbReference>
<dbReference type="GO" id="GO:0008033">
    <property type="term" value="P:tRNA processing"/>
    <property type="evidence" value="ECO:0007669"/>
    <property type="project" value="UniProtKB-UniRule"/>
</dbReference>
<dbReference type="CDD" id="cd02440">
    <property type="entry name" value="AdoMet_MTases"/>
    <property type="match status" value="1"/>
</dbReference>
<dbReference type="Gene3D" id="3.40.50.150">
    <property type="entry name" value="Vaccinia Virus protein VP39"/>
    <property type="match status" value="1"/>
</dbReference>
<dbReference type="HAMAP" id="MF_01872">
    <property type="entry name" value="tRNA_methyltr_YfiC"/>
    <property type="match status" value="1"/>
</dbReference>
<dbReference type="InterPro" id="IPR002052">
    <property type="entry name" value="DNA_methylase_N6_adenine_CS"/>
</dbReference>
<dbReference type="InterPro" id="IPR029063">
    <property type="entry name" value="SAM-dependent_MTases_sf"/>
</dbReference>
<dbReference type="InterPro" id="IPR007848">
    <property type="entry name" value="Small_mtfrase_dom"/>
</dbReference>
<dbReference type="InterPro" id="IPR050210">
    <property type="entry name" value="tRNA_Adenine-N(6)_MTase"/>
</dbReference>
<dbReference type="InterPro" id="IPR022882">
    <property type="entry name" value="tRNA_adenine-N6_MeTrfase"/>
</dbReference>
<dbReference type="NCBIfam" id="NF047853">
    <property type="entry name" value="tRm6a37MtseTrmN"/>
    <property type="match status" value="1"/>
</dbReference>
<dbReference type="PANTHER" id="PTHR47739">
    <property type="entry name" value="TRNA1(VAL) (ADENINE(37)-N6)-METHYLTRANSFERASE"/>
    <property type="match status" value="1"/>
</dbReference>
<dbReference type="PANTHER" id="PTHR47739:SF1">
    <property type="entry name" value="TRNA1(VAL) (ADENINE(37)-N6)-METHYLTRANSFERASE"/>
    <property type="match status" value="1"/>
</dbReference>
<dbReference type="Pfam" id="PF05175">
    <property type="entry name" value="MTS"/>
    <property type="match status" value="1"/>
</dbReference>
<dbReference type="PRINTS" id="PR00507">
    <property type="entry name" value="N12N6MTFRASE"/>
</dbReference>
<dbReference type="SUPFAM" id="SSF53335">
    <property type="entry name" value="S-adenosyl-L-methionine-dependent methyltransferases"/>
    <property type="match status" value="1"/>
</dbReference>
<dbReference type="PROSITE" id="PS00092">
    <property type="entry name" value="N6_MTASE"/>
    <property type="match status" value="1"/>
</dbReference>
<gene>
    <name type="ordered locus">YPDSF_1562</name>
</gene>
<keyword id="KW-0963">Cytoplasm</keyword>
<keyword id="KW-0489">Methyltransferase</keyword>
<keyword id="KW-0949">S-adenosyl-L-methionine</keyword>
<keyword id="KW-0808">Transferase</keyword>
<keyword id="KW-0819">tRNA processing</keyword>
<proteinExistence type="inferred from homology"/>
<name>TRMN6_YERPP</name>
<protein>
    <recommendedName>
        <fullName evidence="1">tRNA1(Val) (adenine(37)-N6)-methyltransferase</fullName>
        <ecNumber evidence="1">2.1.1.223</ecNumber>
    </recommendedName>
    <alternativeName>
        <fullName evidence="1">tRNA m6A37 methyltransferase</fullName>
    </alternativeName>
</protein>
<accession>A4TKY7</accession>
<organism>
    <name type="scientific">Yersinia pestis (strain Pestoides F)</name>
    <dbReference type="NCBI Taxonomy" id="386656"/>
    <lineage>
        <taxon>Bacteria</taxon>
        <taxon>Pseudomonadati</taxon>
        <taxon>Pseudomonadota</taxon>
        <taxon>Gammaproteobacteria</taxon>
        <taxon>Enterobacterales</taxon>
        <taxon>Yersiniaceae</taxon>
        <taxon>Yersinia</taxon>
    </lineage>
</organism>
<comment type="function">
    <text evidence="1">Specifically methylates the adenine in position 37 of tRNA(1)(Val) (anticodon cmo5UAC).</text>
</comment>
<comment type="catalytic activity">
    <reaction evidence="1">
        <text>adenosine(37) in tRNA1(Val) + S-adenosyl-L-methionine = N(6)-methyladenosine(37) in tRNA1(Val) + S-adenosyl-L-homocysteine + H(+)</text>
        <dbReference type="Rhea" id="RHEA:43160"/>
        <dbReference type="Rhea" id="RHEA-COMP:10369"/>
        <dbReference type="Rhea" id="RHEA-COMP:10370"/>
        <dbReference type="ChEBI" id="CHEBI:15378"/>
        <dbReference type="ChEBI" id="CHEBI:57856"/>
        <dbReference type="ChEBI" id="CHEBI:59789"/>
        <dbReference type="ChEBI" id="CHEBI:74411"/>
        <dbReference type="ChEBI" id="CHEBI:74449"/>
        <dbReference type="EC" id="2.1.1.223"/>
    </reaction>
</comment>
<comment type="subcellular location">
    <subcellularLocation>
        <location evidence="1">Cytoplasm</location>
    </subcellularLocation>
</comment>
<comment type="similarity">
    <text evidence="1">Belongs to the methyltransferase superfamily. tRNA (adenine-N(6)-)-methyltransferase family.</text>
</comment>
<sequence length="248" mass="27761">MGEQLKKQPVLRGGGFTFKQFFVAHDRCAMKVGTDGVLLGAWVPVLHARRVLDIGCGSGLIALMIAQRSLPQVQIDGVELEPAAAQQASSNVELSPWAERIHIHQQDIHQFAENHPHQYDLIVSNPPYFAPAIACRDEARDTARYTGSLTHDALLNCAEKLITEDGMFCVVLPHELGIEFARLAGQQGWFVRCQVDIRDRPGKPLHRMLLTLSRQAGETVYQHLALRQSEGVYSPEFCQLISDFYLNY</sequence>
<feature type="chain" id="PRO_0000387452" description="tRNA1(Val) (adenine(37)-N6)-methyltransferase">
    <location>
        <begin position="1"/>
        <end position="248"/>
    </location>
</feature>